<dbReference type="EMBL" id="AE006468">
    <property type="protein sequence ID" value="AAL23013.1"/>
    <property type="molecule type" value="Genomic_DNA"/>
</dbReference>
<dbReference type="EMBL" id="U01246">
    <property type="status" value="NOT_ANNOTATED_CDS"/>
    <property type="molecule type" value="Unassigned_DNA"/>
</dbReference>
<dbReference type="RefSeq" id="NP_463054.1">
    <property type="nucleotide sequence ID" value="NC_003197.2"/>
</dbReference>
<dbReference type="RefSeq" id="WP_000956811.1">
    <property type="nucleotide sequence ID" value="NC_003197.2"/>
</dbReference>
<dbReference type="SMR" id="P40730"/>
<dbReference type="STRING" id="99287.STM4189"/>
<dbReference type="PaxDb" id="99287-STM4189"/>
<dbReference type="GeneID" id="1255715"/>
<dbReference type="KEGG" id="stm:STM4189"/>
<dbReference type="PATRIC" id="fig|99287.12.peg.4403"/>
<dbReference type="HOGENOM" id="CLU_025623_2_1_6"/>
<dbReference type="OMA" id="RINSHIC"/>
<dbReference type="PhylomeDB" id="P40730"/>
<dbReference type="BioCyc" id="SENT99287:STM4189-MONOMER"/>
<dbReference type="Proteomes" id="UP000001014">
    <property type="component" value="Chromosome"/>
</dbReference>
<dbReference type="GO" id="GO:0005886">
    <property type="term" value="C:plasma membrane"/>
    <property type="evidence" value="ECO:0007669"/>
    <property type="project" value="UniProtKB-SubCell"/>
</dbReference>
<dbReference type="GO" id="GO:0005436">
    <property type="term" value="F:sodium:phosphate symporter activity"/>
    <property type="evidence" value="ECO:0007669"/>
    <property type="project" value="InterPro"/>
</dbReference>
<dbReference type="GO" id="GO:0044341">
    <property type="term" value="P:sodium-dependent phosphate transport"/>
    <property type="evidence" value="ECO:0007669"/>
    <property type="project" value="InterPro"/>
</dbReference>
<dbReference type="FunFam" id="1.20.58.220:FF:000003">
    <property type="entry name" value="Inorganic phosphate transporter, sodium-dependent"/>
    <property type="match status" value="1"/>
</dbReference>
<dbReference type="Gene3D" id="1.20.58.220">
    <property type="entry name" value="Phosphate transport system protein phou homolog 2, domain 2"/>
    <property type="match status" value="1"/>
</dbReference>
<dbReference type="InterPro" id="IPR003841">
    <property type="entry name" value="Na/Pi_transpt"/>
</dbReference>
<dbReference type="InterPro" id="IPR004633">
    <property type="entry name" value="NaPi_cotrn-rel/YqeW-like"/>
</dbReference>
<dbReference type="InterPro" id="IPR038078">
    <property type="entry name" value="PhoU-like_sf"/>
</dbReference>
<dbReference type="NCBIfam" id="TIGR01013">
    <property type="entry name" value="2a58"/>
    <property type="match status" value="1"/>
</dbReference>
<dbReference type="NCBIfam" id="NF037997">
    <property type="entry name" value="Na_Pi_symport"/>
    <property type="match status" value="1"/>
</dbReference>
<dbReference type="NCBIfam" id="TIGR00704">
    <property type="entry name" value="NaPi_cotrn_rel"/>
    <property type="match status" value="1"/>
</dbReference>
<dbReference type="PANTHER" id="PTHR10010:SF39">
    <property type="entry name" value="PHOU DOMAIN-CONTAINING PROTEIN"/>
    <property type="match status" value="1"/>
</dbReference>
<dbReference type="PANTHER" id="PTHR10010">
    <property type="entry name" value="SOLUTE CARRIER FAMILY 34 SODIUM PHOSPHATE , MEMBER 2-RELATED"/>
    <property type="match status" value="1"/>
</dbReference>
<dbReference type="Pfam" id="PF02690">
    <property type="entry name" value="Na_Pi_cotrans"/>
    <property type="match status" value="2"/>
</dbReference>
<dbReference type="SUPFAM" id="SSF109755">
    <property type="entry name" value="PhoU-like"/>
    <property type="match status" value="1"/>
</dbReference>
<feature type="chain" id="PRO_0000169708" description="Putative inorganic phosphate export protein YjbB">
    <location>
        <begin position="1"/>
        <end position="543"/>
    </location>
</feature>
<feature type="transmembrane region" description="Helical" evidence="2">
    <location>
        <begin position="1"/>
        <end position="21"/>
    </location>
</feature>
<feature type="transmembrane region" description="Helical" evidence="2">
    <location>
        <begin position="76"/>
        <end position="96"/>
    </location>
</feature>
<feature type="transmembrane region" description="Helical" evidence="2">
    <location>
        <begin position="99"/>
        <end position="119"/>
    </location>
</feature>
<feature type="transmembrane region" description="Helical" evidence="2">
    <location>
        <begin position="134"/>
        <end position="154"/>
    </location>
</feature>
<feature type="transmembrane region" description="Helical" evidence="2">
    <location>
        <begin position="175"/>
        <end position="195"/>
    </location>
</feature>
<feature type="transmembrane region" description="Helical" evidence="2">
    <location>
        <begin position="196"/>
        <end position="216"/>
    </location>
</feature>
<feature type="transmembrane region" description="Helical" evidence="2">
    <location>
        <begin position="238"/>
        <end position="258"/>
    </location>
</feature>
<feature type="transmembrane region" description="Helical" evidence="2">
    <location>
        <begin position="274"/>
        <end position="294"/>
    </location>
</feature>
<proteinExistence type="inferred from homology"/>
<gene>
    <name type="primary">yjbB</name>
    <name type="ordered locus">STM4189</name>
</gene>
<evidence type="ECO:0000250" key="1">
    <source>
        <dbReference type="UniProtKB" id="P0AF43"/>
    </source>
</evidence>
<evidence type="ECO:0000255" key="2"/>
<evidence type="ECO:0000305" key="3"/>
<comment type="function">
    <text evidence="1">Might be involved in phosphate export.</text>
</comment>
<comment type="catalytic activity">
    <reaction evidence="1">
        <text>phosphate(in) = phosphate(out)</text>
        <dbReference type="Rhea" id="RHEA:32823"/>
        <dbReference type="ChEBI" id="CHEBI:43474"/>
    </reaction>
</comment>
<comment type="subcellular location">
    <subcellularLocation>
        <location evidence="3">Cell inner membrane</location>
        <topology evidence="2">Multi-pass membrane protein</topology>
    </subcellularLocation>
</comment>
<comment type="similarity">
    <text evidence="3">Belongs to the YjbB family.</text>
</comment>
<reference key="1">
    <citation type="journal article" date="2001" name="Nature">
        <title>Complete genome sequence of Salmonella enterica serovar Typhimurium LT2.</title>
        <authorList>
            <person name="McClelland M."/>
            <person name="Sanderson K.E."/>
            <person name="Spieth J."/>
            <person name="Clifton S.W."/>
            <person name="Latreille P."/>
            <person name="Courtney L."/>
            <person name="Porwollik S."/>
            <person name="Ali J."/>
            <person name="Dante M."/>
            <person name="Du F."/>
            <person name="Hou S."/>
            <person name="Layman D."/>
            <person name="Leonard S."/>
            <person name="Nguyen C."/>
            <person name="Scott K."/>
            <person name="Holmes A."/>
            <person name="Grewal N."/>
            <person name="Mulvaney E."/>
            <person name="Ryan E."/>
            <person name="Sun H."/>
            <person name="Florea L."/>
            <person name="Miller W."/>
            <person name="Stoneking T."/>
            <person name="Nhan M."/>
            <person name="Waterston R."/>
            <person name="Wilson R.K."/>
        </authorList>
    </citation>
    <scope>NUCLEOTIDE SEQUENCE [LARGE SCALE GENOMIC DNA]</scope>
    <source>
        <strain>LT2 / SGSC1412 / ATCC 700720</strain>
    </source>
</reference>
<reference key="2">
    <citation type="journal article" date="1994" name="J. Bacteriol.">
        <title>Cloning and nucleotide sequence of the cyclic AMP receptor protein-regulated Salmonella typhimurium pepE gene and crystallization of its product, an alpha-aspartyl dipeptidase.</title>
        <authorList>
            <person name="Conlin C.A."/>
            <person name="Hakensson K."/>
            <person name="Liljas A."/>
            <person name="Miller C.G."/>
        </authorList>
    </citation>
    <scope>NUCLEOTIDE SEQUENCE [GENOMIC DNA] OF 492-543</scope>
    <source>
        <strain>LT2</strain>
    </source>
</reference>
<protein>
    <recommendedName>
        <fullName evidence="1">Putative inorganic phosphate export protein YjbB</fullName>
    </recommendedName>
</protein>
<keyword id="KW-0997">Cell inner membrane</keyword>
<keyword id="KW-1003">Cell membrane</keyword>
<keyword id="KW-0472">Membrane</keyword>
<keyword id="KW-0592">Phosphate transport</keyword>
<keyword id="KW-1185">Reference proteome</keyword>
<keyword id="KW-0812">Transmembrane</keyword>
<keyword id="KW-1133">Transmembrane helix</keyword>
<keyword id="KW-0813">Transport</keyword>
<organism>
    <name type="scientific">Salmonella typhimurium (strain LT2 / SGSC1412 / ATCC 700720)</name>
    <dbReference type="NCBI Taxonomy" id="99287"/>
    <lineage>
        <taxon>Bacteria</taxon>
        <taxon>Pseudomonadati</taxon>
        <taxon>Pseudomonadota</taxon>
        <taxon>Gammaproteobacteria</taxon>
        <taxon>Enterobacterales</taxon>
        <taxon>Enterobacteriaceae</taxon>
        <taxon>Salmonella</taxon>
    </lineage>
</organism>
<accession>P40730</accession>
<sequence length="543" mass="59445">MLTLLHLLSAVALLVWGTHIVRTGVMRVFGARLRTVLSRSVEKKPLAFCAGIGVTALVQSSNATTLLVTSFVAQDLVALTPALVIVLGADVGTALMARILTFDLSWLSPLLIFIGVIFFLGRKQSRAGQLGRVGIGLGLILLALELIVQAVTPITQANGVQVIFASLTGDIMLDALIGAMFAIISYSSLAAVLLTATLTAAGIISFPVALCLVIGANLGSGLLAMLNNSAANAAARRVALGSLLFKLIGSLVILPFVHPLANLMDELSLPKSELVIYFHVFYNLVRCLAMVPFAELMARFCKRIIRDEPELDTHLKPKHLDVSALDTPTLALANAAREVLRIGDAMEQMMEGLKKVMHGEPREEKALRKLADDVNVLYTAIKLYLARMPKDELAAEESRRWAEIIEMALNLEQASDIIERMGSEIADKSLAARRAFSEEGLKELDALYDQLLSNLQLAMSVFFSGDVTSARRLRRSKHRFRILNRRYSHAHVDRLHQQNVQSIETSSLHLGLLGDMKRLNSLFCSVAYSVLEQPDQDEERGEY</sequence>
<name>YJBB_SALTY</name>